<comment type="catalytic activity">
    <reaction evidence="1">
        <text>(6S)-5,6,7,8-tetrahydrofolate + formate + ATP = (6R)-10-formyltetrahydrofolate + ADP + phosphate</text>
        <dbReference type="Rhea" id="RHEA:20221"/>
        <dbReference type="ChEBI" id="CHEBI:15740"/>
        <dbReference type="ChEBI" id="CHEBI:30616"/>
        <dbReference type="ChEBI" id="CHEBI:43474"/>
        <dbReference type="ChEBI" id="CHEBI:57453"/>
        <dbReference type="ChEBI" id="CHEBI:195366"/>
        <dbReference type="ChEBI" id="CHEBI:456216"/>
        <dbReference type="EC" id="6.3.4.3"/>
    </reaction>
</comment>
<comment type="pathway">
    <text evidence="1">One-carbon metabolism; tetrahydrofolate interconversion.</text>
</comment>
<comment type="similarity">
    <text evidence="1">Belongs to the formate--tetrahydrofolate ligase family.</text>
</comment>
<organism>
    <name type="scientific">Thermoplasma acidophilum (strain ATCC 25905 / DSM 1728 / JCM 9062 / NBRC 15155 / AMRC-C165)</name>
    <dbReference type="NCBI Taxonomy" id="273075"/>
    <lineage>
        <taxon>Archaea</taxon>
        <taxon>Methanobacteriati</taxon>
        <taxon>Thermoplasmatota</taxon>
        <taxon>Thermoplasmata</taxon>
        <taxon>Thermoplasmatales</taxon>
        <taxon>Thermoplasmataceae</taxon>
        <taxon>Thermoplasma</taxon>
    </lineage>
</organism>
<name>FTHS_THEAC</name>
<keyword id="KW-0067">ATP-binding</keyword>
<keyword id="KW-0436">Ligase</keyword>
<keyword id="KW-0547">Nucleotide-binding</keyword>
<keyword id="KW-0554">One-carbon metabolism</keyword>
<keyword id="KW-1185">Reference proteome</keyword>
<gene>
    <name evidence="1" type="primary">fhs</name>
    <name type="ordered locus">Ta1478</name>
</gene>
<protein>
    <recommendedName>
        <fullName evidence="1">Formate--tetrahydrofolate ligase</fullName>
        <ecNumber evidence="1">6.3.4.3</ecNumber>
    </recommendedName>
    <alternativeName>
        <fullName evidence="1">Formyltetrahydrofolate synthetase</fullName>
        <shortName evidence="1">FHS</shortName>
        <shortName evidence="1">FTHFS</shortName>
    </alternativeName>
</protein>
<accession>Q9HI67</accession>
<evidence type="ECO:0000255" key="1">
    <source>
        <dbReference type="HAMAP-Rule" id="MF_01543"/>
    </source>
</evidence>
<proteinExistence type="inferred from homology"/>
<feature type="chain" id="PRO_0000199415" description="Formate--tetrahydrofolate ligase">
    <location>
        <begin position="1"/>
        <end position="536"/>
    </location>
</feature>
<feature type="binding site" evidence="1">
    <location>
        <begin position="51"/>
        <end position="58"/>
    </location>
    <ligand>
        <name>ATP</name>
        <dbReference type="ChEBI" id="CHEBI:30616"/>
    </ligand>
</feature>
<reference key="1">
    <citation type="journal article" date="2000" name="Nature">
        <title>The genome sequence of the thermoacidophilic scavenger Thermoplasma acidophilum.</title>
        <authorList>
            <person name="Ruepp A."/>
            <person name="Graml W."/>
            <person name="Santos-Martinez M.-L."/>
            <person name="Koretke K.K."/>
            <person name="Volker C."/>
            <person name="Mewes H.-W."/>
            <person name="Frishman D."/>
            <person name="Stocker S."/>
            <person name="Lupas A.N."/>
            <person name="Baumeister W."/>
        </authorList>
    </citation>
    <scope>NUCLEOTIDE SEQUENCE [LARGE SCALE GENOMIC DNA]</scope>
    <source>
        <strain>ATCC 25905 / DSM 1728 / JCM 9062 / NBRC 15155 / AMRC-C165</strain>
    </source>
</reference>
<dbReference type="EC" id="6.3.4.3" evidence="1"/>
<dbReference type="EMBL" id="AL445067">
    <property type="protein sequence ID" value="CAC12596.1"/>
    <property type="molecule type" value="Genomic_DNA"/>
</dbReference>
<dbReference type="RefSeq" id="WP_010901878.1">
    <property type="nucleotide sequence ID" value="NC_002578.1"/>
</dbReference>
<dbReference type="SMR" id="Q9HI67"/>
<dbReference type="STRING" id="273075.gene:9572707"/>
<dbReference type="PaxDb" id="273075-Ta1478"/>
<dbReference type="EnsemblBacteria" id="CAC12596">
    <property type="protein sequence ID" value="CAC12596"/>
    <property type="gene ID" value="CAC12596"/>
</dbReference>
<dbReference type="KEGG" id="tac:Ta1478"/>
<dbReference type="eggNOG" id="arCOG04541">
    <property type="taxonomic scope" value="Archaea"/>
</dbReference>
<dbReference type="HOGENOM" id="CLU_003601_3_3_2"/>
<dbReference type="InParanoid" id="Q9HI67"/>
<dbReference type="OrthoDB" id="53075at2157"/>
<dbReference type="BRENDA" id="6.3.4.3">
    <property type="organism ID" value="6324"/>
</dbReference>
<dbReference type="UniPathway" id="UPA00193"/>
<dbReference type="Proteomes" id="UP000001024">
    <property type="component" value="Chromosome"/>
</dbReference>
<dbReference type="GO" id="GO:0005524">
    <property type="term" value="F:ATP binding"/>
    <property type="evidence" value="ECO:0007669"/>
    <property type="project" value="UniProtKB-UniRule"/>
</dbReference>
<dbReference type="GO" id="GO:0004329">
    <property type="term" value="F:formate-tetrahydrofolate ligase activity"/>
    <property type="evidence" value="ECO:0007669"/>
    <property type="project" value="UniProtKB-UniRule"/>
</dbReference>
<dbReference type="GO" id="GO:0035999">
    <property type="term" value="P:tetrahydrofolate interconversion"/>
    <property type="evidence" value="ECO:0007669"/>
    <property type="project" value="UniProtKB-UniRule"/>
</dbReference>
<dbReference type="Gene3D" id="3.30.1510.10">
    <property type="entry name" value="Domain 2, N(10)-formyltetrahydrofolate synthetase"/>
    <property type="match status" value="1"/>
</dbReference>
<dbReference type="Gene3D" id="3.10.410.10">
    <property type="entry name" value="Formyltetrahydrofolate synthetase, domain 3"/>
    <property type="match status" value="1"/>
</dbReference>
<dbReference type="Gene3D" id="3.40.50.300">
    <property type="entry name" value="P-loop containing nucleotide triphosphate hydrolases"/>
    <property type="match status" value="1"/>
</dbReference>
<dbReference type="HAMAP" id="MF_01543">
    <property type="entry name" value="FTHFS"/>
    <property type="match status" value="1"/>
</dbReference>
<dbReference type="InterPro" id="IPR000559">
    <property type="entry name" value="Formate_THF_ligase"/>
</dbReference>
<dbReference type="InterPro" id="IPR020628">
    <property type="entry name" value="Formate_THF_ligase_CS"/>
</dbReference>
<dbReference type="InterPro" id="IPR027417">
    <property type="entry name" value="P-loop_NTPase"/>
</dbReference>
<dbReference type="NCBIfam" id="NF010030">
    <property type="entry name" value="PRK13505.1"/>
    <property type="match status" value="1"/>
</dbReference>
<dbReference type="Pfam" id="PF01268">
    <property type="entry name" value="FTHFS"/>
    <property type="match status" value="1"/>
</dbReference>
<dbReference type="SUPFAM" id="SSF52540">
    <property type="entry name" value="P-loop containing nucleoside triphosphate hydrolases"/>
    <property type="match status" value="1"/>
</dbReference>
<dbReference type="PROSITE" id="PS00721">
    <property type="entry name" value="FTHFS_1"/>
    <property type="match status" value="1"/>
</dbReference>
<dbReference type="PROSITE" id="PS00722">
    <property type="entry name" value="FTHFS_2"/>
    <property type="match status" value="1"/>
</dbReference>
<sequence length="536" mass="57647">MRDIEEIIKEIGLGRDDYELYGRYMAKLDLGLQNRGRPRAKLILVTAMTPTPAGEGKTTTTIGLGQAMKKLGKNVAIAIREPSLGPCFGIKGGATGGGKSKVEPSDRINLFFTGDFPTITAAHNLLSAMINNHMYHGNELNLDPKRITFPRTIDMNDRSLRSILVGVGPRDMGVLAGDSFVITPASEVMAITGLSLNYQDLKARLSRILAGFTTKNKPVFAGDLKAEGSMAALLRDALKPNLVQTTEGVPAFVHTGPFGNIAHGTSSLVADKIALNLFDYVITEAGFGSDLGAEKFFNLASRIGDLPINAVVLVATIRAIKHHGGSKKEGEDIDAVKTGSKNLIRHVQNIRNFGIDPVVAVNRFPTDTDGEIRALGEILDSNGIKWALSEVFAKGGEGGIDLANKVLASLGSHEIKRTYDLKDDIRTKIEKIARNVYGADGVIFEKKALSDMKKAEEIMENPYVCMAKTQYSFSDDASLLNDPHGFTIKVQSINISSGAGFVVPILGEIMTMPGLPKHPAAENIDLTDSGEITGLF</sequence>